<protein>
    <recommendedName>
        <fullName>Acidic phosphoprotein</fullName>
    </recommendedName>
    <alternativeName>
        <fullName>50 kDa antigen</fullName>
    </alternativeName>
</protein>
<feature type="signal peptide" description="Or 24" evidence="1">
    <location>
        <begin position="1"/>
        <end position="15"/>
    </location>
</feature>
<feature type="chain" id="PRO_0000024575" description="Acidic phosphoprotein">
    <location>
        <begin position="16"/>
        <end position="441"/>
    </location>
</feature>
<feature type="repeat" description="1-1">
    <location>
        <begin position="186"/>
        <end position="193"/>
    </location>
</feature>
<feature type="repeat" description="1-2">
    <location>
        <begin position="194"/>
        <end position="201"/>
    </location>
</feature>
<feature type="repeat" description="1-3">
    <location>
        <begin position="202"/>
        <end position="209"/>
    </location>
</feature>
<feature type="repeat" description="1-4">
    <location>
        <begin position="210"/>
        <end position="217"/>
    </location>
</feature>
<feature type="repeat" description="1-5">
    <location>
        <begin position="218"/>
        <end position="225"/>
    </location>
</feature>
<feature type="repeat" description="1-6">
    <location>
        <begin position="226"/>
        <end position="233"/>
    </location>
</feature>
<feature type="repeat" description="1-7">
    <location>
        <begin position="234"/>
        <end position="241"/>
    </location>
</feature>
<feature type="repeat" description="1-8">
    <location>
        <begin position="242"/>
        <end position="249"/>
    </location>
</feature>
<feature type="repeat" description="1-9">
    <location>
        <begin position="250"/>
        <end position="257"/>
    </location>
</feature>
<feature type="repeat" description="1-10">
    <location>
        <begin position="258"/>
        <end position="265"/>
    </location>
</feature>
<feature type="repeat" description="1-11">
    <location>
        <begin position="266"/>
        <end position="273"/>
    </location>
</feature>
<feature type="repeat" description="1-12">
    <location>
        <begin position="274"/>
        <end position="281"/>
    </location>
</feature>
<feature type="repeat" description="1-13">
    <location>
        <begin position="282"/>
        <end position="289"/>
    </location>
</feature>
<feature type="repeat" description="1-14">
    <location>
        <begin position="290"/>
        <end position="297"/>
    </location>
</feature>
<feature type="repeat" description="1-15">
    <location>
        <begin position="298"/>
        <end position="305"/>
    </location>
</feature>
<feature type="repeat" description="1-16">
    <location>
        <begin position="306"/>
        <end position="313"/>
    </location>
</feature>
<feature type="repeat" description="2-1">
    <location>
        <begin position="353"/>
        <end position="360"/>
    </location>
</feature>
<feature type="repeat" description="2-2">
    <location>
        <begin position="361"/>
        <end position="368"/>
    </location>
</feature>
<feature type="region of interest" description="16 X 8 AA tandem repeats">
    <location>
        <begin position="186"/>
        <end position="313"/>
    </location>
</feature>
<feature type="region of interest" description="Disordered" evidence="2">
    <location>
        <begin position="232"/>
        <end position="416"/>
    </location>
</feature>
<feature type="region of interest" description="2 X 9 AA tandem repeats">
    <location>
        <begin position="353"/>
        <end position="370"/>
    </location>
</feature>
<feature type="compositionally biased region" description="Low complexity" evidence="2">
    <location>
        <begin position="238"/>
        <end position="247"/>
    </location>
</feature>
<feature type="compositionally biased region" description="Acidic residues" evidence="2">
    <location>
        <begin position="248"/>
        <end position="273"/>
    </location>
</feature>
<feature type="compositionally biased region" description="Polar residues" evidence="2">
    <location>
        <begin position="294"/>
        <end position="306"/>
    </location>
</feature>
<feature type="compositionally biased region" description="Acidic residues" evidence="2">
    <location>
        <begin position="312"/>
        <end position="332"/>
    </location>
</feature>
<feature type="compositionally biased region" description="Basic and acidic residues" evidence="2">
    <location>
        <begin position="349"/>
        <end position="371"/>
    </location>
</feature>
<feature type="compositionally biased region" description="Basic residues" evidence="2">
    <location>
        <begin position="372"/>
        <end position="415"/>
    </location>
</feature>
<feature type="glycosylation site" description="N-linked (GlcNAc...) asparagine" evidence="1">
    <location>
        <position position="21"/>
    </location>
</feature>
<feature type="glycosylation site" description="N-linked (GlcNAc...) asparagine" evidence="1">
    <location>
        <position position="112"/>
    </location>
</feature>
<keyword id="KW-1003">Cell membrane</keyword>
<keyword id="KW-0325">Glycoprotein</keyword>
<keyword id="KW-0472">Membrane</keyword>
<keyword id="KW-0597">Phosphoprotein</keyword>
<keyword id="KW-0677">Repeat</keyword>
<keyword id="KW-0732">Signal</keyword>
<comment type="function">
    <text>During infection, this phosphoprotein probably modulates the structure of the red cell membrane to the advantage of the parasite, although its precise function is not known.</text>
</comment>
<comment type="subcellular location">
    <subcellularLocation>
        <location>Cell membrane</location>
        <topology>Peripheral membrane protein</topology>
        <orientation>Cytoplasmic side</orientation>
    </subcellularLocation>
    <text>Peripheral membrane protein on the cytoplasmic face of the host erythrocyte membrane.</text>
</comment>
<comment type="miscellaneous">
    <text>Associated with the host red cell membrane throughout the entire erythrocytic cycle.</text>
</comment>
<organism>
    <name type="scientific">Plasmodium chabaudi</name>
    <dbReference type="NCBI Taxonomy" id="5825"/>
    <lineage>
        <taxon>Eukaryota</taxon>
        <taxon>Sar</taxon>
        <taxon>Alveolata</taxon>
        <taxon>Apicomplexa</taxon>
        <taxon>Aconoidasida</taxon>
        <taxon>Haemosporida</taxon>
        <taxon>Plasmodiidae</taxon>
        <taxon>Plasmodium</taxon>
        <taxon>Plasmodium (Vinckeia)</taxon>
    </lineage>
</organism>
<sequence>MKAISLGLISSIIFSIVLAKNSSGSGSSTGCFGCFRKKPKKKILATEVAKPVKAPETADFDPKLPNLKFIEEFEPITIEGCKSRLHELDEPFVSETDGMIIDKVTGFSRRENDSVLSGWYIRPYEEGYENMIKVNFIPLREYYKRMENRPPKQYDGPPPIPDMPQGYVPPKKEEIPVEQYVIQLSEEDPYLLQEEDALSLMEYDAETLNEGDAETLNEGDAETLNEYDAGTLNEEDAGTTNEAGEGTTNEEGEGAANEYDAETLNEYDADTLNEYDAGTLNEYDAGTLNEEEGSTTNEAGEGTSNEAGEGTANDDEELDEEVASIFDDDEHADDLSLLDYDENSNENQENVKKGNENEGEQKGNENEGEQKGKKKKAKEKSKKKVKNKPTMTTKKKKKKEKKKKKKEKEKKKEKKVKVEVIMDHFSEMEKMMNNKIKHWNK</sequence>
<dbReference type="EMBL" id="M95789">
    <property type="protein sequence ID" value="AAA29732.1"/>
    <property type="molecule type" value="Genomic_DNA"/>
</dbReference>
<dbReference type="PIR" id="A48455">
    <property type="entry name" value="A48455"/>
</dbReference>
<dbReference type="GlyCosmos" id="Q02752">
    <property type="glycosylation" value="2 sites, No reported glycans"/>
</dbReference>
<dbReference type="VEuPathDB" id="PlasmoDB:PCHAS_1001500"/>
<dbReference type="GO" id="GO:0005886">
    <property type="term" value="C:plasma membrane"/>
    <property type="evidence" value="ECO:0007669"/>
    <property type="project" value="UniProtKB-SubCell"/>
</dbReference>
<dbReference type="InterPro" id="IPR010882">
    <property type="entry name" value="PCEMA1"/>
</dbReference>
<dbReference type="Pfam" id="PF07418">
    <property type="entry name" value="PCEMA1"/>
    <property type="match status" value="1"/>
</dbReference>
<evidence type="ECO:0000255" key="1"/>
<evidence type="ECO:0000256" key="2">
    <source>
        <dbReference type="SAM" id="MobiDB-lite"/>
    </source>
</evidence>
<proteinExistence type="inferred from homology"/>
<gene>
    <name type="primary">PCEMA1</name>
</gene>
<reference key="1">
    <citation type="journal article" date="1992" name="Mol. Biochem. Parasitol.">
        <title>Structure of a Plasmodium chabaudi acidic phosphoprotein that is associated with the host erythrocyte membrane.</title>
        <authorList>
            <person name="Deleersnijder W."/>
            <person name="Prasomsitti P."/>
            <person name="Tungpradubkul S."/>
            <person name="Hendrix D."/>
            <person name="Hamers-Casterman C."/>
            <person name="Hamers R."/>
        </authorList>
    </citation>
    <scope>NUCLEOTIDE SEQUENCE [GENOMIC DNA]</scope>
    <source>
        <strain>IP-PC1</strain>
    </source>
</reference>
<name>PHPA_PLACH</name>
<accession>Q02752</accession>